<proteinExistence type="evidence at transcript level"/>
<reference key="1">
    <citation type="journal article" date="2000" name="FEBS Lett.">
        <title>Nuclear localization of a hypoxia-inducible novel non-symbiotic hemoglobin in cultured alfalfa cells.</title>
        <authorList>
            <person name="Seregelyes C."/>
            <person name="Mustardy L."/>
            <person name="Ayaydin F."/>
            <person name="Sass L."/>
            <person name="Kovacs L."/>
            <person name="Endre G."/>
            <person name="Lukacs N."/>
            <person name="Kovacs I."/>
            <person name="Vass I."/>
            <person name="Kiss G.B."/>
            <person name="Horvath G.V."/>
            <person name="Dudits D."/>
        </authorList>
    </citation>
    <scope>NUCLEOTIDE SEQUENCE [MRNA]</scope>
    <scope>SUBCELLULAR LOCATION</scope>
    <scope>TISSUE SPECIFICITY</scope>
    <scope>INDUCTION BY HYPOXIA</scope>
    <source>
        <strain>cv. Varia</strain>
    </source>
</reference>
<reference key="2">
    <citation type="journal article" date="2002" name="Plant Cell Physiol.">
        <title>Expression of symbiotic and nonsymbiotic globin genes responding to microsymbionts on Lotus japonicus.</title>
        <authorList>
            <person name="Uchiumi T."/>
            <person name="Shimoda Y."/>
            <person name="Tsuruta T."/>
            <person name="Mukoyoshi Y."/>
            <person name="Suzuki A."/>
            <person name="Senoo K."/>
            <person name="Sato S."/>
            <person name="Kato T."/>
            <person name="Tabata S."/>
            <person name="Higashi S."/>
            <person name="Abe M."/>
        </authorList>
    </citation>
    <scope>REPRESSION BY GLOMUS FUNGUS</scope>
</reference>
<sequence length="160" mass="17958">MGTLDTKGFTEEQEALVVKSWNAMKKNSAELGLKLFLKIFEIAPSAQKLFSFLKDSKVPLEQNTKLKPHAMSVFLMTCESAVQLRKSGKVTVRESSLKKLGANHFKYGVVDEHFEVTKFALLETIKEAVPEMWSPAMKNAWGEAYDQLVNAIKSEMKPSS</sequence>
<name>HBL1_MEDSA</name>
<accession>Q9FVL0</accession>
<feature type="chain" id="PRO_0000193020" description="Anaerobic nitrite reductase MHB1">
    <location>
        <begin position="1"/>
        <end position="160"/>
    </location>
</feature>
<feature type="domain" description="Globin" evidence="6">
    <location>
        <begin position="8"/>
        <end position="157"/>
    </location>
</feature>
<feature type="short sequence motif" description="Homodimerization" evidence="2">
    <location>
        <begin position="41"/>
        <end position="45"/>
    </location>
</feature>
<feature type="short sequence motif" description="Homodimerization" evidence="2">
    <location>
        <begin position="111"/>
        <end position="123"/>
    </location>
</feature>
<feature type="binding site" evidence="3">
    <location>
        <position position="51"/>
    </location>
    <ligand>
        <name>heme b</name>
        <dbReference type="ChEBI" id="CHEBI:60344"/>
    </ligand>
</feature>
<feature type="binding site" evidence="2">
    <location>
        <position position="65"/>
    </location>
    <ligand>
        <name>heme b</name>
        <dbReference type="ChEBI" id="CHEBI:60344"/>
    </ligand>
</feature>
<feature type="binding site" description="distal binding residue" evidence="6">
    <location>
        <position position="69"/>
    </location>
    <ligand>
        <name>heme b</name>
        <dbReference type="ChEBI" id="CHEBI:60344"/>
    </ligand>
    <ligandPart>
        <name>Fe</name>
        <dbReference type="ChEBI" id="CHEBI:18248"/>
    </ligandPart>
</feature>
<feature type="binding site" evidence="2">
    <location>
        <position position="99"/>
    </location>
    <ligand>
        <name>heme b</name>
        <dbReference type="ChEBI" id="CHEBI:60344"/>
    </ligand>
</feature>
<feature type="binding site" description="proximal binding residue" evidence="6">
    <location>
        <position position="104"/>
    </location>
    <ligand>
        <name>heme b</name>
        <dbReference type="ChEBI" id="CHEBI:60344"/>
    </ligand>
    <ligandPart>
        <name>Fe</name>
        <dbReference type="ChEBI" id="CHEBI:18248"/>
    </ligandPart>
</feature>
<feature type="site" description="Homodimerization" evidence="2">
    <location>
        <position position="138"/>
    </location>
</feature>
<evidence type="ECO:0000250" key="1">
    <source>
        <dbReference type="UniProtKB" id="I3SPW2"/>
    </source>
</evidence>
<evidence type="ECO:0000250" key="2">
    <source>
        <dbReference type="UniProtKB" id="O04986"/>
    </source>
</evidence>
<evidence type="ECO:0000250" key="3">
    <source>
        <dbReference type="UniProtKB" id="P68168"/>
    </source>
</evidence>
<evidence type="ECO:0000250" key="4">
    <source>
        <dbReference type="UniProtKB" id="Q3C1F4"/>
    </source>
</evidence>
<evidence type="ECO:0000250" key="5">
    <source>
        <dbReference type="UniProtKB" id="Q42831"/>
    </source>
</evidence>
<evidence type="ECO:0000255" key="6">
    <source>
        <dbReference type="PROSITE-ProRule" id="PRU00238"/>
    </source>
</evidence>
<evidence type="ECO:0000269" key="7">
    <source>
    </source>
</evidence>
<evidence type="ECO:0000269" key="8">
    <source>
    </source>
</evidence>
<evidence type="ECO:0000303" key="9">
    <source>
    </source>
</evidence>
<evidence type="ECO:0000303" key="10">
    <source>
    </source>
</evidence>
<evidence type="ECO:0000305" key="11"/>
<gene>
    <name evidence="9" type="primary">MHB1</name>
    <name evidence="9" type="synonym">GLB1</name>
</gene>
<organism>
    <name type="scientific">Medicago sativa</name>
    <name type="common">Alfalfa</name>
    <dbReference type="NCBI Taxonomy" id="3879"/>
    <lineage>
        <taxon>Eukaryota</taxon>
        <taxon>Viridiplantae</taxon>
        <taxon>Streptophyta</taxon>
        <taxon>Embryophyta</taxon>
        <taxon>Tracheophyta</taxon>
        <taxon>Spermatophyta</taxon>
        <taxon>Magnoliopsida</taxon>
        <taxon>eudicotyledons</taxon>
        <taxon>Gunneridae</taxon>
        <taxon>Pentapetalae</taxon>
        <taxon>rosids</taxon>
        <taxon>fabids</taxon>
        <taxon>Fabales</taxon>
        <taxon>Fabaceae</taxon>
        <taxon>Papilionoideae</taxon>
        <taxon>50 kb inversion clade</taxon>
        <taxon>NPAAA clade</taxon>
        <taxon>Hologalegina</taxon>
        <taxon>IRL clade</taxon>
        <taxon>Trifolieae</taxon>
        <taxon>Medicago</taxon>
    </lineage>
</organism>
<keyword id="KW-0963">Cytoplasm</keyword>
<keyword id="KW-0349">Heme</keyword>
<keyword id="KW-0408">Iron</keyword>
<keyword id="KW-0479">Metal-binding</keyword>
<keyword id="KW-0539">Nucleus</keyword>
<keyword id="KW-0560">Oxidoreductase</keyword>
<keyword id="KW-0346">Stress response</keyword>
<dbReference type="EC" id="1.7.2.-" evidence="2"/>
<dbReference type="EMBL" id="AF172172">
    <property type="protein sequence ID" value="AAG29748.1"/>
    <property type="molecule type" value="mRNA"/>
</dbReference>
<dbReference type="SMR" id="Q9FVL0"/>
<dbReference type="GO" id="GO:0005737">
    <property type="term" value="C:cytoplasm"/>
    <property type="evidence" value="ECO:0007669"/>
    <property type="project" value="UniProtKB-SubCell"/>
</dbReference>
<dbReference type="GO" id="GO:0016363">
    <property type="term" value="C:nuclear matrix"/>
    <property type="evidence" value="ECO:0007669"/>
    <property type="project" value="UniProtKB-SubCell"/>
</dbReference>
<dbReference type="GO" id="GO:0020037">
    <property type="term" value="F:heme binding"/>
    <property type="evidence" value="ECO:0007669"/>
    <property type="project" value="InterPro"/>
</dbReference>
<dbReference type="GO" id="GO:0046872">
    <property type="term" value="F:metal ion binding"/>
    <property type="evidence" value="ECO:0007669"/>
    <property type="project" value="UniProtKB-KW"/>
</dbReference>
<dbReference type="GO" id="GO:0016491">
    <property type="term" value="F:oxidoreductase activity"/>
    <property type="evidence" value="ECO:0007669"/>
    <property type="project" value="UniProtKB-KW"/>
</dbReference>
<dbReference type="GO" id="GO:0019825">
    <property type="term" value="F:oxygen binding"/>
    <property type="evidence" value="ECO:0007669"/>
    <property type="project" value="InterPro"/>
</dbReference>
<dbReference type="GO" id="GO:0036377">
    <property type="term" value="P:arbuscular mycorrhizal association"/>
    <property type="evidence" value="ECO:0000270"/>
    <property type="project" value="UniProtKB"/>
</dbReference>
<dbReference type="GO" id="GO:0009610">
    <property type="term" value="P:response to symbiotic fungus"/>
    <property type="evidence" value="ECO:0000270"/>
    <property type="project" value="UniProtKB"/>
</dbReference>
<dbReference type="CDD" id="cd14784">
    <property type="entry name" value="class1_nsHb-like"/>
    <property type="match status" value="1"/>
</dbReference>
<dbReference type="Gene3D" id="1.10.490.10">
    <property type="entry name" value="Globins"/>
    <property type="match status" value="1"/>
</dbReference>
<dbReference type="InterPro" id="IPR000971">
    <property type="entry name" value="Globin"/>
</dbReference>
<dbReference type="InterPro" id="IPR009050">
    <property type="entry name" value="Globin-like_sf"/>
</dbReference>
<dbReference type="InterPro" id="IPR012292">
    <property type="entry name" value="Globin/Proto"/>
</dbReference>
<dbReference type="InterPro" id="IPR001032">
    <property type="entry name" value="Leghaemoglobin-like"/>
</dbReference>
<dbReference type="PANTHER" id="PTHR22924">
    <property type="entry name" value="LEGHEMOGLOBIN-RELATED"/>
    <property type="match status" value="1"/>
</dbReference>
<dbReference type="PANTHER" id="PTHR22924:SF39">
    <property type="entry name" value="NON-SYMBIOTIC HEMOGLOBIN 1"/>
    <property type="match status" value="1"/>
</dbReference>
<dbReference type="Pfam" id="PF00042">
    <property type="entry name" value="Globin"/>
    <property type="match status" value="1"/>
</dbReference>
<dbReference type="PRINTS" id="PR00188">
    <property type="entry name" value="PLANTGLOBIN"/>
</dbReference>
<dbReference type="SUPFAM" id="SSF46458">
    <property type="entry name" value="Globin-like"/>
    <property type="match status" value="1"/>
</dbReference>
<dbReference type="PROSITE" id="PS01033">
    <property type="entry name" value="GLOBIN"/>
    <property type="match status" value="1"/>
</dbReference>
<comment type="function">
    <text evidence="1 2 4 5">Phytoglobin that reduces nitrite to nitric oxide (NO) under anoxic conditions (e.g. during flooding or in waterlogged soil) and upon root nodulation (By similarity). Required for general plant development and during nodulation, especially for the onset of symbiosis (By similarity). Monitors nitric oxide (NO) levels during early phase of the nitrogen-fixing symbiosis and buffers oxygen in functioning nodules (By similarity). May not function as an oxygen storage or transport protein (By similarity). Has an unusually high affinity for O(2) through a hexacoordinate heme iron because of a very low dissociation constant (By similarity).</text>
</comment>
<comment type="catalytic activity">
    <reaction evidence="2">
        <text>Fe(III)-heme b-[protein] + nitric oxide + H2O = Fe(II)-heme b-[protein] + nitrite + 2 H(+)</text>
        <dbReference type="Rhea" id="RHEA:77711"/>
        <dbReference type="Rhea" id="RHEA-COMP:18975"/>
        <dbReference type="Rhea" id="RHEA-COMP:18976"/>
        <dbReference type="ChEBI" id="CHEBI:15377"/>
        <dbReference type="ChEBI" id="CHEBI:15378"/>
        <dbReference type="ChEBI" id="CHEBI:16301"/>
        <dbReference type="ChEBI" id="CHEBI:16480"/>
        <dbReference type="ChEBI" id="CHEBI:55376"/>
        <dbReference type="ChEBI" id="CHEBI:60344"/>
    </reaction>
    <physiologicalReaction direction="right-to-left" evidence="2">
        <dbReference type="Rhea" id="RHEA:77713"/>
    </physiologicalReaction>
</comment>
<comment type="cofactor">
    <cofactor evidence="3">
        <name>heme b</name>
        <dbReference type="ChEBI" id="CHEBI:60344"/>
    </cofactor>
    <text evidence="3">Binds 1 heme group per subunit.</text>
</comment>
<comment type="subunit">
    <text evidence="2">Homodimer.</text>
</comment>
<comment type="subcellular location">
    <subcellularLocation>
        <location evidence="7">Nucleus matrix</location>
    </subcellularLocation>
    <subcellularLocation>
        <location evidence="7">Cytoplasm</location>
    </subcellularLocation>
    <text evidence="7">But not in the nucleolus, and to a lower extent, cytoplasmic.</text>
</comment>
<comment type="tissue specificity">
    <text evidence="7">Root specific.</text>
</comment>
<comment type="induction">
    <text evidence="7 8">By hypoxia, but not by cold stress (PubMed:11018535). Repressed in roots colonized by the mycorrhizal fungus Glomus sp. R10 (PubMed:12461135).</text>
</comment>
<comment type="miscellaneous">
    <text evidence="7">Constant level of protein accumulation after induction by hypoxia may indicate a higher turnover.</text>
</comment>
<comment type="similarity">
    <text evidence="11">Belongs to the plant globin family.</text>
</comment>
<protein>
    <recommendedName>
        <fullName evidence="2">Anaerobic nitrite reductase MHB1</fullName>
        <ecNumber evidence="2">1.7.2.-</ecNumber>
    </recommendedName>
    <alternativeName>
        <fullName evidence="9">MEDsa GLB1</fullName>
    </alternativeName>
    <alternativeName>
        <fullName evidence="9">Non-symbiotic hemoglobin 1</fullName>
        <shortName evidence="10">MsHB1</shortName>
    </alternativeName>
</protein>